<sequence>MEPALISPELLDGSSLLPHSSADESSSTGLSLGSLLSSSNDLSSETSMPQFEQLERMLGSPTIANHVDFTTQSTDLGFLSDPNITLSSIELTELFSIPSDNASLMPEPSRQPSPLKAPDLQTTPPATGLIDSEANPTSVPLGNSVEQSADVKQLRKKYHEKYKERNRVAAGKSRQKQVDLIELLQAEQREEERRRKALERELSQIHKELLDLKQELQHHIRIANCMTMMSHGAHMQTLGLLAQDMLR</sequence>
<proteinExistence type="evidence at protein level"/>
<name>OTAR1_ASPC5</name>
<gene>
    <name evidence="6" type="primary">otaR1</name>
    <name evidence="7" type="synonym">OTAbZIP</name>
    <name type="ORF">ASPCADRAFT_7821</name>
</gene>
<feature type="chain" id="PRO_0000440592" description="Transcription factor otaR1">
    <location>
        <begin position="1"/>
        <end position="247"/>
    </location>
</feature>
<feature type="domain" description="bZIP" evidence="1">
    <location>
        <begin position="156"/>
        <end position="219"/>
    </location>
</feature>
<feature type="region of interest" description="Disordered" evidence="2">
    <location>
        <begin position="1"/>
        <end position="48"/>
    </location>
</feature>
<feature type="region of interest" description="Disordered" evidence="2">
    <location>
        <begin position="100"/>
        <end position="143"/>
    </location>
</feature>
<feature type="region of interest" description="Basic motif" evidence="1">
    <location>
        <begin position="156"/>
        <end position="196"/>
    </location>
</feature>
<feature type="region of interest" description="Leucine-zipper" evidence="1">
    <location>
        <begin position="198"/>
        <end position="212"/>
    </location>
</feature>
<feature type="compositionally biased region" description="Low complexity" evidence="2">
    <location>
        <begin position="23"/>
        <end position="47"/>
    </location>
</feature>
<feature type="compositionally biased region" description="Polar residues" evidence="2">
    <location>
        <begin position="134"/>
        <end position="143"/>
    </location>
</feature>
<accession>A0A1R3RGK4</accession>
<organism>
    <name type="scientific">Aspergillus carbonarius (strain ITEM 5010)</name>
    <dbReference type="NCBI Taxonomy" id="602072"/>
    <lineage>
        <taxon>Eukaryota</taxon>
        <taxon>Fungi</taxon>
        <taxon>Dikarya</taxon>
        <taxon>Ascomycota</taxon>
        <taxon>Pezizomycotina</taxon>
        <taxon>Eurotiomycetes</taxon>
        <taxon>Eurotiomycetidae</taxon>
        <taxon>Eurotiales</taxon>
        <taxon>Aspergillaceae</taxon>
        <taxon>Aspergillus</taxon>
        <taxon>Aspergillus subgen. Circumdati</taxon>
    </lineage>
</organism>
<protein>
    <recommendedName>
        <fullName evidence="6">Transcription factor otaR1</fullName>
    </recommendedName>
    <alternativeName>
        <fullName evidence="6">Ochratoxin A biosynthesis cluster protein R1</fullName>
    </alternativeName>
</protein>
<dbReference type="EMBL" id="KV907504">
    <property type="protein sequence ID" value="OOF93603.1"/>
    <property type="molecule type" value="Genomic_DNA"/>
</dbReference>
<dbReference type="SMR" id="A0A1R3RGK4"/>
<dbReference type="STRING" id="602072.A0A1R3RGK4"/>
<dbReference type="VEuPathDB" id="FungiDB:ASPCADRAFT_7821"/>
<dbReference type="OMA" id="MMSHGAH"/>
<dbReference type="OrthoDB" id="4506474at2759"/>
<dbReference type="Proteomes" id="UP000188318">
    <property type="component" value="Unassembled WGS sequence"/>
</dbReference>
<dbReference type="GO" id="GO:0005634">
    <property type="term" value="C:nucleus"/>
    <property type="evidence" value="ECO:0007669"/>
    <property type="project" value="UniProtKB-SubCell"/>
</dbReference>
<dbReference type="GO" id="GO:0000981">
    <property type="term" value="F:DNA-binding transcription factor activity, RNA polymerase II-specific"/>
    <property type="evidence" value="ECO:0007669"/>
    <property type="project" value="TreeGrafter"/>
</dbReference>
<dbReference type="GO" id="GO:0000978">
    <property type="term" value="F:RNA polymerase II cis-regulatory region sequence-specific DNA binding"/>
    <property type="evidence" value="ECO:0007669"/>
    <property type="project" value="TreeGrafter"/>
</dbReference>
<dbReference type="GO" id="GO:1900818">
    <property type="term" value="P:ochratoxin A biosynthetic process"/>
    <property type="evidence" value="ECO:0000315"/>
    <property type="project" value="GO_Central"/>
</dbReference>
<dbReference type="Gene3D" id="1.20.5.170">
    <property type="match status" value="1"/>
</dbReference>
<dbReference type="InterPro" id="IPR000837">
    <property type="entry name" value="AP-1"/>
</dbReference>
<dbReference type="InterPro" id="IPR004827">
    <property type="entry name" value="bZIP"/>
</dbReference>
<dbReference type="InterPro" id="IPR046347">
    <property type="entry name" value="bZIP_sf"/>
</dbReference>
<dbReference type="PANTHER" id="PTHR23351:SF24">
    <property type="entry name" value="ACTIVATING TRANSCRIPTION FACTOR 3-RELATED"/>
    <property type="match status" value="1"/>
</dbReference>
<dbReference type="PANTHER" id="PTHR23351">
    <property type="entry name" value="FOS TRANSCRIPTION FACTOR-RELATED"/>
    <property type="match status" value="1"/>
</dbReference>
<dbReference type="SUPFAM" id="SSF57959">
    <property type="entry name" value="Leucine zipper domain"/>
    <property type="match status" value="1"/>
</dbReference>
<dbReference type="PROSITE" id="PS50217">
    <property type="entry name" value="BZIP"/>
    <property type="match status" value="1"/>
</dbReference>
<dbReference type="PROSITE" id="PS00036">
    <property type="entry name" value="BZIP_BASIC"/>
    <property type="match status" value="1"/>
</dbReference>
<comment type="function">
    <text evidence="3 4">Transcription factor; part of the gene cluster that mediates the biosynthesis of ochratoxin A (OTA), a mycotoxin demonstrated to have nephrotoxic, immunotoxic, genotoxic, neurotoxic, and teratogenic properties (PubMed:30054361, PubMed:33540740). Positively regulates the expression of the cluster genes otaA, otaB, otaC and otaD, and the subsequent production of OTA (PubMed:30054361, PubMed:33540740).</text>
</comment>
<comment type="subcellular location">
    <subcellularLocation>
        <location evidence="1">Nucleus</location>
    </subcellularLocation>
</comment>
<comment type="induction">
    <text evidence="5">Stilbenes such as resveratrol, piceatannol and pterostilbene downregulate the expression of the ochratoxin cluster.</text>
</comment>
<comment type="disruption phenotype">
    <text evidence="3 4">Results in the loss of production of ochratoxin A and the intermediates ochratoxin B and ochratoxin beta (PubMed:30054361, PubMed:33540740). Leads to down-regulation of expression of the cluster genes otaA, otaB, otaC and otaD (PubMed:30054361, PubMed:33540740).</text>
</comment>
<comment type="biotechnology">
    <text evidence="5">Stilbenes such as resveratrol, piceatannol and pterostilbene affect the expression of the OTA cluster to reduce ochratoxin A and B production and thus could be used as naturally safe and efficient compounds in food active packaging or preservatives against ochratoxin A in food (PubMed:35082059). Pterostilbene with methoxy groups demonstrated greater inhibitory and antitoxic activity than resveratrol and piceatannol (PubMed:35082059).</text>
</comment>
<reference key="1">
    <citation type="journal article" date="2017" name="Genome Biol.">
        <title>Comparative genomics reveals high biological diversity and specific adaptations in the industrially and medically important fungal genus Aspergillus.</title>
        <authorList>
            <person name="de Vries R.P."/>
            <person name="Riley R."/>
            <person name="Wiebenga A."/>
            <person name="Aguilar-Osorio G."/>
            <person name="Amillis S."/>
            <person name="Uchima C.A."/>
            <person name="Anderluh G."/>
            <person name="Asadollahi M."/>
            <person name="Askin M."/>
            <person name="Barry K."/>
            <person name="Battaglia E."/>
            <person name="Bayram O."/>
            <person name="Benocci T."/>
            <person name="Braus-Stromeyer S.A."/>
            <person name="Caldana C."/>
            <person name="Canovas D."/>
            <person name="Cerqueira G.C."/>
            <person name="Chen F."/>
            <person name="Chen W."/>
            <person name="Choi C."/>
            <person name="Clum A."/>
            <person name="Dos Santos R.A."/>
            <person name="Damasio A.R."/>
            <person name="Diallinas G."/>
            <person name="Emri T."/>
            <person name="Fekete E."/>
            <person name="Flipphi M."/>
            <person name="Freyberg S."/>
            <person name="Gallo A."/>
            <person name="Gournas C."/>
            <person name="Habgood R."/>
            <person name="Hainaut M."/>
            <person name="Harispe M.L."/>
            <person name="Henrissat B."/>
            <person name="Hilden K.S."/>
            <person name="Hope R."/>
            <person name="Hossain A."/>
            <person name="Karabika E."/>
            <person name="Karaffa L."/>
            <person name="Karanyi Z."/>
            <person name="Krasevec N."/>
            <person name="Kuo A."/>
            <person name="Kusch H."/>
            <person name="LaButti K."/>
            <person name="Lagendijk E.L."/>
            <person name="Lapidus A."/>
            <person name="Levasseur A."/>
            <person name="Lindquist E."/>
            <person name="Lipzen A."/>
            <person name="Logrieco A.F."/>
            <person name="MacCabe A."/>
            <person name="Maekelae M.R."/>
            <person name="Malavazi I."/>
            <person name="Melin P."/>
            <person name="Meyer V."/>
            <person name="Mielnichuk N."/>
            <person name="Miskei M."/>
            <person name="Molnar A.P."/>
            <person name="Mule G."/>
            <person name="Ngan C.Y."/>
            <person name="Orejas M."/>
            <person name="Orosz E."/>
            <person name="Ouedraogo J.P."/>
            <person name="Overkamp K.M."/>
            <person name="Park H.-S."/>
            <person name="Perrone G."/>
            <person name="Piumi F."/>
            <person name="Punt P.J."/>
            <person name="Ram A.F."/>
            <person name="Ramon A."/>
            <person name="Rauscher S."/>
            <person name="Record E."/>
            <person name="Riano-Pachon D.M."/>
            <person name="Robert V."/>
            <person name="Roehrig J."/>
            <person name="Ruller R."/>
            <person name="Salamov A."/>
            <person name="Salih N.S."/>
            <person name="Samson R.A."/>
            <person name="Sandor E."/>
            <person name="Sanguinetti M."/>
            <person name="Schuetze T."/>
            <person name="Sepcic K."/>
            <person name="Shelest E."/>
            <person name="Sherlock G."/>
            <person name="Sophianopoulou V."/>
            <person name="Squina F.M."/>
            <person name="Sun H."/>
            <person name="Susca A."/>
            <person name="Todd R.B."/>
            <person name="Tsang A."/>
            <person name="Unkles S.E."/>
            <person name="van de Wiele N."/>
            <person name="van Rossen-Uffink D."/>
            <person name="Oliveira J.V."/>
            <person name="Vesth T.C."/>
            <person name="Visser J."/>
            <person name="Yu J.-H."/>
            <person name="Zhou M."/>
            <person name="Andersen M.R."/>
            <person name="Archer D.B."/>
            <person name="Baker S.E."/>
            <person name="Benoit I."/>
            <person name="Brakhage A.A."/>
            <person name="Braus G.H."/>
            <person name="Fischer R."/>
            <person name="Frisvad J.C."/>
            <person name="Goldman G.H."/>
            <person name="Houbraken J."/>
            <person name="Oakley B."/>
            <person name="Pocsi I."/>
            <person name="Scazzocchio C."/>
            <person name="Seiboth B."/>
            <person name="vanKuyk P.A."/>
            <person name="Wortman J."/>
            <person name="Dyer P.S."/>
            <person name="Grigoriev I.V."/>
        </authorList>
    </citation>
    <scope>NUCLEOTIDE SEQUENCE [LARGE SCALE GENOMIC DNA]</scope>
    <source>
        <strain>ITEM 5010</strain>
    </source>
</reference>
<reference key="2">
    <citation type="journal article" date="2018" name="Appl. Environ. Microbiol.">
        <title>A consensus ochratoxin A biosynthetic pathway: insights from the genome sequence of Aspergillus ochraceus and a comparative genomic analysis.</title>
        <authorList>
            <person name="Wang Y."/>
            <person name="Wang L."/>
            <person name="Wu F."/>
            <person name="Liu F."/>
            <person name="Wang Q."/>
            <person name="Zhang X."/>
            <person name="Selvaraj J.N."/>
            <person name="Zhao Y."/>
            <person name="Xing F."/>
            <person name="Yin W.B."/>
            <person name="Liu Y."/>
        </authorList>
    </citation>
    <scope>FUNCTION</scope>
    <scope>DISRUPTION PHENOTYPE</scope>
</reference>
<reference key="3">
    <citation type="journal article" date="2020" name="Front. Microbiol.">
        <title>Comparative genomic analysis of ochratoxin A biosynthetic cluster in producing fungi: new evidence of a cyclase gene involvement.</title>
        <authorList>
            <person name="Ferrara M."/>
            <person name="Gallo A."/>
            <person name="Perrone G."/>
            <person name="Magista D."/>
            <person name="Baker S.E."/>
        </authorList>
    </citation>
    <scope>FUNCTION</scope>
</reference>
<reference key="4">
    <citation type="journal article" date="2021" name="Toxins">
        <title>Functional role of Aspergillus carbonarius AcOTAbZIP gene, a bZIP transcription factor within the OTA gene cluster.</title>
        <authorList>
            <person name="Gerin D."/>
            <person name="Garrapa F."/>
            <person name="Ballester A.R."/>
            <person name="Gonzalez-Candelas L."/>
            <person name="De Miccolis Angelini R.M."/>
            <person name="Faretra F."/>
            <person name="Pollastro S."/>
        </authorList>
    </citation>
    <scope>FUNCTION</scope>
    <scope>DISRUPTION PHENOTYPE</scope>
</reference>
<reference key="5">
    <citation type="journal article" date="2022" name="Food Microbiol.">
        <title>Three stilbenes make difference to the antifungal effects on ochratoxin A and its precursor production of Aspergillus carbonarius.</title>
        <authorList>
            <person name="Cai X."/>
            <person name="Qi J."/>
            <person name="Xu Z."/>
            <person name="Huang L."/>
            <person name="Li Y."/>
            <person name="Ren X."/>
            <person name="Kong Q."/>
        </authorList>
    </citation>
    <scope>INDUCTION</scope>
    <scope>BIOTECHNOLOGY</scope>
</reference>
<keyword id="KW-0238">DNA-binding</keyword>
<keyword id="KW-0539">Nucleus</keyword>
<keyword id="KW-1185">Reference proteome</keyword>
<keyword id="KW-0804">Transcription</keyword>
<keyword id="KW-0805">Transcription regulation</keyword>
<evidence type="ECO:0000255" key="1">
    <source>
        <dbReference type="PROSITE-ProRule" id="PRU00978"/>
    </source>
</evidence>
<evidence type="ECO:0000256" key="2">
    <source>
        <dbReference type="SAM" id="MobiDB-lite"/>
    </source>
</evidence>
<evidence type="ECO:0000269" key="3">
    <source>
    </source>
</evidence>
<evidence type="ECO:0000269" key="4">
    <source>
    </source>
</evidence>
<evidence type="ECO:0000269" key="5">
    <source>
    </source>
</evidence>
<evidence type="ECO:0000303" key="6">
    <source>
    </source>
</evidence>
<evidence type="ECO:0000303" key="7">
    <source>
    </source>
</evidence>